<keyword id="KW-0627">Porphyrin biosynthesis</keyword>
<keyword id="KW-0808">Transferase</keyword>
<organism>
    <name type="scientific">Ehrlichia canis (strain Jake)</name>
    <dbReference type="NCBI Taxonomy" id="269484"/>
    <lineage>
        <taxon>Bacteria</taxon>
        <taxon>Pseudomonadati</taxon>
        <taxon>Pseudomonadota</taxon>
        <taxon>Alphaproteobacteria</taxon>
        <taxon>Rickettsiales</taxon>
        <taxon>Anaplasmataceae</taxon>
        <taxon>Ehrlichia</taxon>
    </lineage>
</organism>
<proteinExistence type="inferred from homology"/>
<evidence type="ECO:0000255" key="1">
    <source>
        <dbReference type="HAMAP-Rule" id="MF_00260"/>
    </source>
</evidence>
<gene>
    <name evidence="1" type="primary">hemC</name>
    <name type="ordered locus">Ecaj_0354</name>
</gene>
<sequence>MNIRIGTRGSVLALAQTLEVTNLLNRYFPEINIQVVKIKTSGDINNKVPINTIGGKGLFIKEIEEALLIGKVDLAVHSVKDIPAFYCDGLIIPCVLKRSSPYDVFVSSKYQSIKSLPINATVGTSSIRRKVQLNYLRPDLQVIPVRGNIDTRILKSDIGEFDGIVLAEAGLIRINKCNVIKEVLDSKIMLSAVGQGAICVQCRADDYNIINKIKVLNCHKSYVCVIAERSFLKTINGSCDTPLAALAQYVDSDTIYMSCMLSNEKEMVFSDCYFKECNAEESGIDMGKKLINELYGSC</sequence>
<name>HEM3_EHRCJ</name>
<comment type="function">
    <text evidence="1">Tetrapolymerization of the monopyrrole PBG into the hydroxymethylbilane pre-uroporphyrinogen in several discrete steps.</text>
</comment>
<comment type="catalytic activity">
    <reaction evidence="1">
        <text>4 porphobilinogen + H2O = hydroxymethylbilane + 4 NH4(+)</text>
        <dbReference type="Rhea" id="RHEA:13185"/>
        <dbReference type="ChEBI" id="CHEBI:15377"/>
        <dbReference type="ChEBI" id="CHEBI:28938"/>
        <dbReference type="ChEBI" id="CHEBI:57845"/>
        <dbReference type="ChEBI" id="CHEBI:58126"/>
        <dbReference type="EC" id="2.5.1.61"/>
    </reaction>
</comment>
<comment type="cofactor">
    <cofactor evidence="1">
        <name>dipyrromethane</name>
        <dbReference type="ChEBI" id="CHEBI:60342"/>
    </cofactor>
    <text evidence="1">Binds 1 dipyrromethane group covalently.</text>
</comment>
<comment type="pathway">
    <text evidence="1">Porphyrin-containing compound metabolism; protoporphyrin-IX biosynthesis; coproporphyrinogen-III from 5-aminolevulinate: step 2/4.</text>
</comment>
<comment type="subunit">
    <text evidence="1">Monomer.</text>
</comment>
<comment type="miscellaneous">
    <text evidence="1">The porphobilinogen subunits are added to the dipyrromethane group.</text>
</comment>
<comment type="similarity">
    <text evidence="1">Belongs to the HMBS family.</text>
</comment>
<protein>
    <recommendedName>
        <fullName evidence="1">Porphobilinogen deaminase</fullName>
        <shortName evidence="1">PBG</shortName>
        <ecNumber evidence="1">2.5.1.61</ecNumber>
    </recommendedName>
    <alternativeName>
        <fullName evidence="1">Hydroxymethylbilane synthase</fullName>
        <shortName evidence="1">HMBS</shortName>
    </alternativeName>
    <alternativeName>
        <fullName evidence="1">Pre-uroporphyrinogen synthase</fullName>
    </alternativeName>
</protein>
<feature type="chain" id="PRO_1000059096" description="Porphobilinogen deaminase">
    <location>
        <begin position="1"/>
        <end position="298"/>
    </location>
</feature>
<feature type="modified residue" description="S-(dipyrrolylmethanemethyl)cysteine" evidence="1">
    <location>
        <position position="239"/>
    </location>
</feature>
<dbReference type="EC" id="2.5.1.61" evidence="1"/>
<dbReference type="EMBL" id="CP000107">
    <property type="protein sequence ID" value="AAZ68397.1"/>
    <property type="molecule type" value="Genomic_DNA"/>
</dbReference>
<dbReference type="RefSeq" id="WP_011304475.1">
    <property type="nucleotide sequence ID" value="NC_007354.1"/>
</dbReference>
<dbReference type="SMR" id="Q3YSA8"/>
<dbReference type="FunCoup" id="Q3YSA8">
    <property type="interactions" value="318"/>
</dbReference>
<dbReference type="STRING" id="269484.Ecaj_0354"/>
<dbReference type="KEGG" id="ecn:Ecaj_0354"/>
<dbReference type="eggNOG" id="COG0181">
    <property type="taxonomic scope" value="Bacteria"/>
</dbReference>
<dbReference type="HOGENOM" id="CLU_019704_0_2_5"/>
<dbReference type="InParanoid" id="Q3YSA8"/>
<dbReference type="UniPathway" id="UPA00251">
    <property type="reaction ID" value="UER00319"/>
</dbReference>
<dbReference type="Proteomes" id="UP000000435">
    <property type="component" value="Chromosome"/>
</dbReference>
<dbReference type="GO" id="GO:0005737">
    <property type="term" value="C:cytoplasm"/>
    <property type="evidence" value="ECO:0007669"/>
    <property type="project" value="TreeGrafter"/>
</dbReference>
<dbReference type="GO" id="GO:0004418">
    <property type="term" value="F:hydroxymethylbilane synthase activity"/>
    <property type="evidence" value="ECO:0007669"/>
    <property type="project" value="UniProtKB-UniRule"/>
</dbReference>
<dbReference type="GO" id="GO:0006782">
    <property type="term" value="P:protoporphyrinogen IX biosynthetic process"/>
    <property type="evidence" value="ECO:0007669"/>
    <property type="project" value="UniProtKB-UniRule"/>
</dbReference>
<dbReference type="FunFam" id="3.40.190.10:FF:000005">
    <property type="entry name" value="Porphobilinogen deaminase"/>
    <property type="match status" value="1"/>
</dbReference>
<dbReference type="Gene3D" id="3.40.190.10">
    <property type="entry name" value="Periplasmic binding protein-like II"/>
    <property type="match status" value="2"/>
</dbReference>
<dbReference type="Gene3D" id="3.30.160.40">
    <property type="entry name" value="Porphobilinogen deaminase, C-terminal domain"/>
    <property type="match status" value="1"/>
</dbReference>
<dbReference type="HAMAP" id="MF_00260">
    <property type="entry name" value="Porphobil_deam"/>
    <property type="match status" value="1"/>
</dbReference>
<dbReference type="InterPro" id="IPR000860">
    <property type="entry name" value="HemC"/>
</dbReference>
<dbReference type="InterPro" id="IPR022419">
    <property type="entry name" value="Porphobilin_deaminase_cofac_BS"/>
</dbReference>
<dbReference type="InterPro" id="IPR022417">
    <property type="entry name" value="Porphobilin_deaminase_N"/>
</dbReference>
<dbReference type="InterPro" id="IPR022418">
    <property type="entry name" value="Porphobilinogen_deaminase_C"/>
</dbReference>
<dbReference type="InterPro" id="IPR036803">
    <property type="entry name" value="Porphobilinogen_deaminase_C_sf"/>
</dbReference>
<dbReference type="NCBIfam" id="TIGR00212">
    <property type="entry name" value="hemC"/>
    <property type="match status" value="1"/>
</dbReference>
<dbReference type="PANTHER" id="PTHR11557">
    <property type="entry name" value="PORPHOBILINOGEN DEAMINASE"/>
    <property type="match status" value="1"/>
</dbReference>
<dbReference type="PANTHER" id="PTHR11557:SF0">
    <property type="entry name" value="PORPHOBILINOGEN DEAMINASE"/>
    <property type="match status" value="1"/>
</dbReference>
<dbReference type="Pfam" id="PF01379">
    <property type="entry name" value="Porphobil_deam"/>
    <property type="match status" value="1"/>
</dbReference>
<dbReference type="Pfam" id="PF03900">
    <property type="entry name" value="Porphobil_deamC"/>
    <property type="match status" value="1"/>
</dbReference>
<dbReference type="PIRSF" id="PIRSF001438">
    <property type="entry name" value="4pyrrol_synth_OHMeBilane_synth"/>
    <property type="match status" value="1"/>
</dbReference>
<dbReference type="PRINTS" id="PR00151">
    <property type="entry name" value="PORPHBDMNASE"/>
</dbReference>
<dbReference type="SUPFAM" id="SSF53850">
    <property type="entry name" value="Periplasmic binding protein-like II"/>
    <property type="match status" value="1"/>
</dbReference>
<dbReference type="SUPFAM" id="SSF54782">
    <property type="entry name" value="Porphobilinogen deaminase (hydroxymethylbilane synthase), C-terminal domain"/>
    <property type="match status" value="1"/>
</dbReference>
<dbReference type="PROSITE" id="PS00533">
    <property type="entry name" value="PORPHOBILINOGEN_DEAM"/>
    <property type="match status" value="1"/>
</dbReference>
<accession>Q3YSA8</accession>
<reference key="1">
    <citation type="journal article" date="2006" name="J. Bacteriol.">
        <title>The genome of the obligately intracellular bacterium Ehrlichia canis reveals themes of complex membrane structure and immune evasion strategies.</title>
        <authorList>
            <person name="Mavromatis K."/>
            <person name="Doyle C.K."/>
            <person name="Lykidis A."/>
            <person name="Ivanova N."/>
            <person name="Francino M.P."/>
            <person name="Chain P."/>
            <person name="Shin M."/>
            <person name="Malfatti S."/>
            <person name="Larimer F."/>
            <person name="Copeland A."/>
            <person name="Detter J.C."/>
            <person name="Land M."/>
            <person name="Richardson P.M."/>
            <person name="Yu X.J."/>
            <person name="Walker D.H."/>
            <person name="McBride J.W."/>
            <person name="Kyrpides N.C."/>
        </authorList>
    </citation>
    <scope>NUCLEOTIDE SEQUENCE [LARGE SCALE GENOMIC DNA]</scope>
    <source>
        <strain>Jake</strain>
    </source>
</reference>